<organism>
    <name type="scientific">Shigella sonnei (strain Ss046)</name>
    <dbReference type="NCBI Taxonomy" id="300269"/>
    <lineage>
        <taxon>Bacteria</taxon>
        <taxon>Pseudomonadati</taxon>
        <taxon>Pseudomonadota</taxon>
        <taxon>Gammaproteobacteria</taxon>
        <taxon>Enterobacterales</taxon>
        <taxon>Enterobacteriaceae</taxon>
        <taxon>Shigella</taxon>
    </lineage>
</organism>
<sequence>MKALTARQQEVFDLIRDHISQTGMPPTRAEIAQRLGFRSPNAAEEHLKALARKGVIEIVSGASRGIRLLQEEEEGLPLVGRVAAGEPLLAQQHIEGHYQVDPSLFKPNADFLLRVSGMSMKDIGIMDGDLLAVHKTQDVRNGQVVVARIDDEVTVKRLKKQGNKVELLPENSEFKPIVVDLRQQSFTIEGLAVGVIRNGDWL</sequence>
<proteinExistence type="inferred from homology"/>
<feature type="chain" id="PRO_1000001346" description="LexA repressor">
    <location>
        <begin position="1"/>
        <end position="202"/>
    </location>
</feature>
<feature type="DNA-binding region" description="H-T-H motif" evidence="1">
    <location>
        <begin position="28"/>
        <end position="48"/>
    </location>
</feature>
<feature type="active site" description="For autocatalytic cleavage activity" evidence="1">
    <location>
        <position position="119"/>
    </location>
</feature>
<feature type="active site" description="For autocatalytic cleavage activity" evidence="1">
    <location>
        <position position="156"/>
    </location>
</feature>
<feature type="site" description="Cleavage; by autolysis" evidence="1">
    <location>
        <begin position="84"/>
        <end position="85"/>
    </location>
</feature>
<reference key="1">
    <citation type="journal article" date="2005" name="Nucleic Acids Res.">
        <title>Genome dynamics and diversity of Shigella species, the etiologic agents of bacillary dysentery.</title>
        <authorList>
            <person name="Yang F."/>
            <person name="Yang J."/>
            <person name="Zhang X."/>
            <person name="Chen L."/>
            <person name="Jiang Y."/>
            <person name="Yan Y."/>
            <person name="Tang X."/>
            <person name="Wang J."/>
            <person name="Xiong Z."/>
            <person name="Dong J."/>
            <person name="Xue Y."/>
            <person name="Zhu Y."/>
            <person name="Xu X."/>
            <person name="Sun L."/>
            <person name="Chen S."/>
            <person name="Nie H."/>
            <person name="Peng J."/>
            <person name="Xu J."/>
            <person name="Wang Y."/>
            <person name="Yuan Z."/>
            <person name="Wen Y."/>
            <person name="Yao Z."/>
            <person name="Shen Y."/>
            <person name="Qiang B."/>
            <person name="Hou Y."/>
            <person name="Yu J."/>
            <person name="Jin Q."/>
        </authorList>
    </citation>
    <scope>NUCLEOTIDE SEQUENCE [LARGE SCALE GENOMIC DNA]</scope>
    <source>
        <strain>Ss046</strain>
    </source>
</reference>
<comment type="function">
    <text evidence="1">Represses a number of genes involved in the response to DNA damage (SOS response), including recA and lexA. Binds to the 16 bp palindromic sequence 5'-CTGTATATATATACAG-3'. In the presence of single-stranded DNA, RecA interacts with LexA causing an autocatalytic cleavage which disrupts the DNA-binding part of LexA, leading to derepression of the SOS regulon and eventually DNA repair.</text>
</comment>
<comment type="catalytic activity">
    <reaction evidence="1">
        <text>Hydrolysis of Ala-|-Gly bond in repressor LexA.</text>
        <dbReference type="EC" id="3.4.21.88"/>
    </reaction>
</comment>
<comment type="subunit">
    <text evidence="1">Homodimer.</text>
</comment>
<comment type="similarity">
    <text evidence="1">Belongs to the peptidase S24 family.</text>
</comment>
<name>LEXA_SHISS</name>
<protein>
    <recommendedName>
        <fullName evidence="1">LexA repressor</fullName>
        <ecNumber evidence="1">3.4.21.88</ecNumber>
    </recommendedName>
</protein>
<gene>
    <name evidence="1" type="primary">lexA</name>
    <name type="ordered locus">SSON_4223</name>
</gene>
<keyword id="KW-0068">Autocatalytic cleavage</keyword>
<keyword id="KW-0227">DNA damage</keyword>
<keyword id="KW-0234">DNA repair</keyword>
<keyword id="KW-0235">DNA replication</keyword>
<keyword id="KW-0238">DNA-binding</keyword>
<keyword id="KW-0378">Hydrolase</keyword>
<keyword id="KW-1185">Reference proteome</keyword>
<keyword id="KW-0678">Repressor</keyword>
<keyword id="KW-0742">SOS response</keyword>
<keyword id="KW-0804">Transcription</keyword>
<keyword id="KW-0805">Transcription regulation</keyword>
<dbReference type="EC" id="3.4.21.88" evidence="1"/>
<dbReference type="EMBL" id="CP000038">
    <property type="protein sequence ID" value="AAZ90721.1"/>
    <property type="molecule type" value="Genomic_DNA"/>
</dbReference>
<dbReference type="RefSeq" id="WP_000646078.1">
    <property type="nucleotide sequence ID" value="NC_007384.1"/>
</dbReference>
<dbReference type="SMR" id="Q3YUU1"/>
<dbReference type="MEROPS" id="S24.001"/>
<dbReference type="GeneID" id="93777788"/>
<dbReference type="KEGG" id="ssn:SSON_4223"/>
<dbReference type="HOGENOM" id="CLU_066192_45_3_6"/>
<dbReference type="Proteomes" id="UP000002529">
    <property type="component" value="Chromosome"/>
</dbReference>
<dbReference type="GO" id="GO:0003677">
    <property type="term" value="F:DNA binding"/>
    <property type="evidence" value="ECO:0007669"/>
    <property type="project" value="UniProtKB-UniRule"/>
</dbReference>
<dbReference type="GO" id="GO:0004252">
    <property type="term" value="F:serine-type endopeptidase activity"/>
    <property type="evidence" value="ECO:0007669"/>
    <property type="project" value="UniProtKB-UniRule"/>
</dbReference>
<dbReference type="GO" id="GO:0006281">
    <property type="term" value="P:DNA repair"/>
    <property type="evidence" value="ECO:0007669"/>
    <property type="project" value="UniProtKB-UniRule"/>
</dbReference>
<dbReference type="GO" id="GO:0006260">
    <property type="term" value="P:DNA replication"/>
    <property type="evidence" value="ECO:0007669"/>
    <property type="project" value="UniProtKB-UniRule"/>
</dbReference>
<dbReference type="GO" id="GO:0045892">
    <property type="term" value="P:negative regulation of DNA-templated transcription"/>
    <property type="evidence" value="ECO:0007669"/>
    <property type="project" value="UniProtKB-UniRule"/>
</dbReference>
<dbReference type="GO" id="GO:0006508">
    <property type="term" value="P:proteolysis"/>
    <property type="evidence" value="ECO:0007669"/>
    <property type="project" value="InterPro"/>
</dbReference>
<dbReference type="GO" id="GO:0009432">
    <property type="term" value="P:SOS response"/>
    <property type="evidence" value="ECO:0007669"/>
    <property type="project" value="UniProtKB-UniRule"/>
</dbReference>
<dbReference type="CDD" id="cd06529">
    <property type="entry name" value="S24_LexA-like"/>
    <property type="match status" value="1"/>
</dbReference>
<dbReference type="FunFam" id="1.10.10.10:FF:000009">
    <property type="entry name" value="LexA repressor"/>
    <property type="match status" value="1"/>
</dbReference>
<dbReference type="FunFam" id="2.10.109.10:FF:000001">
    <property type="entry name" value="LexA repressor"/>
    <property type="match status" value="1"/>
</dbReference>
<dbReference type="Gene3D" id="2.10.109.10">
    <property type="entry name" value="Umud Fragment, subunit A"/>
    <property type="match status" value="1"/>
</dbReference>
<dbReference type="Gene3D" id="1.10.10.10">
    <property type="entry name" value="Winged helix-like DNA-binding domain superfamily/Winged helix DNA-binding domain"/>
    <property type="match status" value="1"/>
</dbReference>
<dbReference type="HAMAP" id="MF_00015">
    <property type="entry name" value="LexA"/>
    <property type="match status" value="1"/>
</dbReference>
<dbReference type="InterPro" id="IPR006200">
    <property type="entry name" value="LexA"/>
</dbReference>
<dbReference type="InterPro" id="IPR039418">
    <property type="entry name" value="LexA-like"/>
</dbReference>
<dbReference type="InterPro" id="IPR036286">
    <property type="entry name" value="LexA/Signal_pep-like_sf"/>
</dbReference>
<dbReference type="InterPro" id="IPR006199">
    <property type="entry name" value="LexA_DNA-bd_dom"/>
</dbReference>
<dbReference type="InterPro" id="IPR050077">
    <property type="entry name" value="LexA_repressor"/>
</dbReference>
<dbReference type="InterPro" id="IPR006197">
    <property type="entry name" value="Peptidase_S24_LexA"/>
</dbReference>
<dbReference type="InterPro" id="IPR015927">
    <property type="entry name" value="Peptidase_S24_S26A/B/C"/>
</dbReference>
<dbReference type="InterPro" id="IPR036388">
    <property type="entry name" value="WH-like_DNA-bd_sf"/>
</dbReference>
<dbReference type="InterPro" id="IPR036390">
    <property type="entry name" value="WH_DNA-bd_sf"/>
</dbReference>
<dbReference type="NCBIfam" id="TIGR00498">
    <property type="entry name" value="lexA"/>
    <property type="match status" value="1"/>
</dbReference>
<dbReference type="PANTHER" id="PTHR33516">
    <property type="entry name" value="LEXA REPRESSOR"/>
    <property type="match status" value="1"/>
</dbReference>
<dbReference type="PANTHER" id="PTHR33516:SF2">
    <property type="entry name" value="LEXA REPRESSOR-RELATED"/>
    <property type="match status" value="1"/>
</dbReference>
<dbReference type="Pfam" id="PF01726">
    <property type="entry name" value="LexA_DNA_bind"/>
    <property type="match status" value="1"/>
</dbReference>
<dbReference type="Pfam" id="PF00717">
    <property type="entry name" value="Peptidase_S24"/>
    <property type="match status" value="1"/>
</dbReference>
<dbReference type="PRINTS" id="PR00726">
    <property type="entry name" value="LEXASERPTASE"/>
</dbReference>
<dbReference type="SUPFAM" id="SSF51306">
    <property type="entry name" value="LexA/Signal peptidase"/>
    <property type="match status" value="1"/>
</dbReference>
<dbReference type="SUPFAM" id="SSF46785">
    <property type="entry name" value="Winged helix' DNA-binding domain"/>
    <property type="match status" value="1"/>
</dbReference>
<evidence type="ECO:0000255" key="1">
    <source>
        <dbReference type="HAMAP-Rule" id="MF_00015"/>
    </source>
</evidence>
<accession>Q3YUU1</accession>